<evidence type="ECO:0000255" key="1">
    <source>
        <dbReference type="HAMAP-Rule" id="MF_00044"/>
    </source>
</evidence>
<sequence>MRSHYNTDLGISHVGQSVKLCGWVNSYRDHGGVIFIDLRDRSGIIQLVCDPNDSKEAHEIASNARNEFVLIAEGTIRPRGEGLVNPKLKTGEIEVVVSKLTIENESAVPPFAIADESVNEELRLKYRFLDLRNPKLYENFALRSKACIAARNSLANMGFLEVETPILTKATPEGARDYLVPSRVHQGEFYALPQSPQLFKQLLMCSGFDRYFQIAKCFRDEDLRADRQPEFTQIDVEMSFCEQKDVINVAETFLKDIFKACGKEIQTPFRQMQYKDAMENYGSDKPDLRFDLKFIDVIDIFAKSNNEIFANIAKDTKKNRIKAIRVPKGDTIFSKRQMQRFEEFVRKFGAQGLAFIQVKEDGLKGPLCKFFSEEDLNELSKRCELEVGDVVFFGAGAKKTVLDYMGRFRIFLANELNLIDPNALEFLWVVDFPMFEQNDDGSYSAMHHPFTMPKNIDETDLEEISSIAYDVVLNGVELGGGSIRIHKNDIQQKVFKLLNIDEEQQKEKFGFLLDALSFGAPPHGGIAIGLDRLIMLVTGANSIREVIAFPKTQRAQCLMTDAPSPASNEAMRELGIKLRENIK</sequence>
<comment type="function">
    <text evidence="1">Aspartyl-tRNA synthetase with relaxed tRNA specificity since it is able to aspartylate not only its cognate tRNA(Asp) but also tRNA(Asn). Reaction proceeds in two steps: L-aspartate is first activated by ATP to form Asp-AMP and then transferred to the acceptor end of tRNA(Asp/Asn).</text>
</comment>
<comment type="catalytic activity">
    <reaction evidence="1">
        <text>tRNA(Asx) + L-aspartate + ATP = L-aspartyl-tRNA(Asx) + AMP + diphosphate</text>
        <dbReference type="Rhea" id="RHEA:18349"/>
        <dbReference type="Rhea" id="RHEA-COMP:9710"/>
        <dbReference type="Rhea" id="RHEA-COMP:9711"/>
        <dbReference type="ChEBI" id="CHEBI:29991"/>
        <dbReference type="ChEBI" id="CHEBI:30616"/>
        <dbReference type="ChEBI" id="CHEBI:33019"/>
        <dbReference type="ChEBI" id="CHEBI:78442"/>
        <dbReference type="ChEBI" id="CHEBI:78516"/>
        <dbReference type="ChEBI" id="CHEBI:456215"/>
        <dbReference type="EC" id="6.1.1.23"/>
    </reaction>
</comment>
<comment type="subunit">
    <text evidence="1">Homodimer.</text>
</comment>
<comment type="subcellular location">
    <subcellularLocation>
        <location evidence="1">Cytoplasm</location>
    </subcellularLocation>
</comment>
<comment type="similarity">
    <text evidence="1">Belongs to the class-II aminoacyl-tRNA synthetase family. Type 1 subfamily.</text>
</comment>
<keyword id="KW-0030">Aminoacyl-tRNA synthetase</keyword>
<keyword id="KW-0067">ATP-binding</keyword>
<keyword id="KW-0963">Cytoplasm</keyword>
<keyword id="KW-0436">Ligase</keyword>
<keyword id="KW-0547">Nucleotide-binding</keyword>
<keyword id="KW-0648">Protein biosynthesis</keyword>
<protein>
    <recommendedName>
        <fullName evidence="1">Aspartate--tRNA(Asp/Asn) ligase</fullName>
        <ecNumber evidence="1">6.1.1.23</ecNumber>
    </recommendedName>
    <alternativeName>
        <fullName evidence="1">Aspartyl-tRNA synthetase</fullName>
        <shortName evidence="1">AspRS</shortName>
    </alternativeName>
    <alternativeName>
        <fullName evidence="1">Non-discriminating aspartyl-tRNA synthetase</fullName>
        <shortName evidence="1">ND-AspRS</shortName>
    </alternativeName>
</protein>
<gene>
    <name evidence="1" type="primary">aspS</name>
    <name type="ordered locus">C8J_0599</name>
</gene>
<proteinExistence type="inferred from homology"/>
<dbReference type="EC" id="6.1.1.23" evidence="1"/>
<dbReference type="EMBL" id="CP000814">
    <property type="protein sequence ID" value="ABV52198.1"/>
    <property type="molecule type" value="Genomic_DNA"/>
</dbReference>
<dbReference type="RefSeq" id="WP_012006668.1">
    <property type="nucleotide sequence ID" value="NC_009839.1"/>
</dbReference>
<dbReference type="SMR" id="A8FL61"/>
<dbReference type="KEGG" id="cju:C8J_0599"/>
<dbReference type="HOGENOM" id="CLU_014330_3_2_7"/>
<dbReference type="GO" id="GO:0005737">
    <property type="term" value="C:cytoplasm"/>
    <property type="evidence" value="ECO:0007669"/>
    <property type="project" value="UniProtKB-SubCell"/>
</dbReference>
<dbReference type="GO" id="GO:0004815">
    <property type="term" value="F:aspartate-tRNA ligase activity"/>
    <property type="evidence" value="ECO:0007669"/>
    <property type="project" value="UniProtKB-UniRule"/>
</dbReference>
<dbReference type="GO" id="GO:0050560">
    <property type="term" value="F:aspartate-tRNA(Asn) ligase activity"/>
    <property type="evidence" value="ECO:0007669"/>
    <property type="project" value="UniProtKB-EC"/>
</dbReference>
<dbReference type="GO" id="GO:0005524">
    <property type="term" value="F:ATP binding"/>
    <property type="evidence" value="ECO:0007669"/>
    <property type="project" value="UniProtKB-UniRule"/>
</dbReference>
<dbReference type="GO" id="GO:0003676">
    <property type="term" value="F:nucleic acid binding"/>
    <property type="evidence" value="ECO:0007669"/>
    <property type="project" value="InterPro"/>
</dbReference>
<dbReference type="GO" id="GO:0006422">
    <property type="term" value="P:aspartyl-tRNA aminoacylation"/>
    <property type="evidence" value="ECO:0007669"/>
    <property type="project" value="UniProtKB-UniRule"/>
</dbReference>
<dbReference type="CDD" id="cd00777">
    <property type="entry name" value="AspRS_core"/>
    <property type="match status" value="1"/>
</dbReference>
<dbReference type="CDD" id="cd04317">
    <property type="entry name" value="EcAspRS_like_N"/>
    <property type="match status" value="1"/>
</dbReference>
<dbReference type="Gene3D" id="3.30.930.10">
    <property type="entry name" value="Bira Bifunctional Protein, Domain 2"/>
    <property type="match status" value="1"/>
</dbReference>
<dbReference type="Gene3D" id="3.30.1360.30">
    <property type="entry name" value="GAD-like domain"/>
    <property type="match status" value="1"/>
</dbReference>
<dbReference type="Gene3D" id="2.40.50.140">
    <property type="entry name" value="Nucleic acid-binding proteins"/>
    <property type="match status" value="1"/>
</dbReference>
<dbReference type="HAMAP" id="MF_00044">
    <property type="entry name" value="Asp_tRNA_synth_type1"/>
    <property type="match status" value="1"/>
</dbReference>
<dbReference type="InterPro" id="IPR004364">
    <property type="entry name" value="Aa-tRNA-synt_II"/>
</dbReference>
<dbReference type="InterPro" id="IPR006195">
    <property type="entry name" value="aa-tRNA-synth_II"/>
</dbReference>
<dbReference type="InterPro" id="IPR045864">
    <property type="entry name" value="aa-tRNA-synth_II/BPL/LPL"/>
</dbReference>
<dbReference type="InterPro" id="IPR004524">
    <property type="entry name" value="Asp-tRNA-ligase_1"/>
</dbReference>
<dbReference type="InterPro" id="IPR047089">
    <property type="entry name" value="Asp-tRNA-ligase_1_N"/>
</dbReference>
<dbReference type="InterPro" id="IPR002312">
    <property type="entry name" value="Asp/Asn-tRNA-synth_IIb"/>
</dbReference>
<dbReference type="InterPro" id="IPR047090">
    <property type="entry name" value="AspRS_core"/>
</dbReference>
<dbReference type="InterPro" id="IPR004115">
    <property type="entry name" value="GAD-like_sf"/>
</dbReference>
<dbReference type="InterPro" id="IPR029351">
    <property type="entry name" value="GAD_dom"/>
</dbReference>
<dbReference type="InterPro" id="IPR012340">
    <property type="entry name" value="NA-bd_OB-fold"/>
</dbReference>
<dbReference type="InterPro" id="IPR004365">
    <property type="entry name" value="NA-bd_OB_tRNA"/>
</dbReference>
<dbReference type="NCBIfam" id="TIGR00459">
    <property type="entry name" value="aspS_bact"/>
    <property type="match status" value="1"/>
</dbReference>
<dbReference type="NCBIfam" id="NF001750">
    <property type="entry name" value="PRK00476.1"/>
    <property type="match status" value="1"/>
</dbReference>
<dbReference type="PANTHER" id="PTHR22594:SF5">
    <property type="entry name" value="ASPARTATE--TRNA LIGASE, MITOCHONDRIAL"/>
    <property type="match status" value="1"/>
</dbReference>
<dbReference type="PANTHER" id="PTHR22594">
    <property type="entry name" value="ASPARTYL/LYSYL-TRNA SYNTHETASE"/>
    <property type="match status" value="1"/>
</dbReference>
<dbReference type="Pfam" id="PF02938">
    <property type="entry name" value="GAD"/>
    <property type="match status" value="1"/>
</dbReference>
<dbReference type="Pfam" id="PF00152">
    <property type="entry name" value="tRNA-synt_2"/>
    <property type="match status" value="1"/>
</dbReference>
<dbReference type="Pfam" id="PF01336">
    <property type="entry name" value="tRNA_anti-codon"/>
    <property type="match status" value="1"/>
</dbReference>
<dbReference type="PRINTS" id="PR01042">
    <property type="entry name" value="TRNASYNTHASP"/>
</dbReference>
<dbReference type="SUPFAM" id="SSF55681">
    <property type="entry name" value="Class II aaRS and biotin synthetases"/>
    <property type="match status" value="1"/>
</dbReference>
<dbReference type="SUPFAM" id="SSF55261">
    <property type="entry name" value="GAD domain-like"/>
    <property type="match status" value="1"/>
</dbReference>
<dbReference type="SUPFAM" id="SSF50249">
    <property type="entry name" value="Nucleic acid-binding proteins"/>
    <property type="match status" value="1"/>
</dbReference>
<dbReference type="PROSITE" id="PS50862">
    <property type="entry name" value="AA_TRNA_LIGASE_II"/>
    <property type="match status" value="1"/>
</dbReference>
<organism>
    <name type="scientific">Campylobacter jejuni subsp. jejuni serotype O:6 (strain 81116 / NCTC 11828)</name>
    <dbReference type="NCBI Taxonomy" id="407148"/>
    <lineage>
        <taxon>Bacteria</taxon>
        <taxon>Pseudomonadati</taxon>
        <taxon>Campylobacterota</taxon>
        <taxon>Epsilonproteobacteria</taxon>
        <taxon>Campylobacterales</taxon>
        <taxon>Campylobacteraceae</taxon>
        <taxon>Campylobacter</taxon>
    </lineage>
</organism>
<reference key="1">
    <citation type="journal article" date="2007" name="J. Bacteriol.">
        <title>The complete genome sequence of Campylobacter jejuni strain 81116 (NCTC11828).</title>
        <authorList>
            <person name="Pearson B.M."/>
            <person name="Gaskin D.J.H."/>
            <person name="Segers R.P.A.M."/>
            <person name="Wells J.M."/>
            <person name="Nuijten P.J.M."/>
            <person name="van Vliet A.H.M."/>
        </authorList>
    </citation>
    <scope>NUCLEOTIDE SEQUENCE [LARGE SCALE GENOMIC DNA]</scope>
    <source>
        <strain>81116 / NCTC 11828</strain>
    </source>
</reference>
<name>SYDND_CAMJ8</name>
<feature type="chain" id="PRO_1000071084" description="Aspartate--tRNA(Asp/Asn) ligase">
    <location>
        <begin position="1"/>
        <end position="583"/>
    </location>
</feature>
<feature type="region of interest" description="Aspartate" evidence="1">
    <location>
        <begin position="197"/>
        <end position="200"/>
    </location>
</feature>
<feature type="binding site" evidence="1">
    <location>
        <position position="173"/>
    </location>
    <ligand>
        <name>L-aspartate</name>
        <dbReference type="ChEBI" id="CHEBI:29991"/>
    </ligand>
</feature>
<feature type="binding site" evidence="1">
    <location>
        <begin position="219"/>
        <end position="221"/>
    </location>
    <ligand>
        <name>ATP</name>
        <dbReference type="ChEBI" id="CHEBI:30616"/>
    </ligand>
</feature>
<feature type="binding site" evidence="1">
    <location>
        <position position="219"/>
    </location>
    <ligand>
        <name>L-aspartate</name>
        <dbReference type="ChEBI" id="CHEBI:29991"/>
    </ligand>
</feature>
<feature type="binding site" evidence="1">
    <location>
        <position position="228"/>
    </location>
    <ligand>
        <name>ATP</name>
        <dbReference type="ChEBI" id="CHEBI:30616"/>
    </ligand>
</feature>
<feature type="binding site" evidence="1">
    <location>
        <position position="447"/>
    </location>
    <ligand>
        <name>L-aspartate</name>
        <dbReference type="ChEBI" id="CHEBI:29991"/>
    </ligand>
</feature>
<feature type="binding site" evidence="1">
    <location>
        <position position="477"/>
    </location>
    <ligand>
        <name>ATP</name>
        <dbReference type="ChEBI" id="CHEBI:30616"/>
    </ligand>
</feature>
<feature type="binding site" evidence="1">
    <location>
        <position position="484"/>
    </location>
    <ligand>
        <name>L-aspartate</name>
        <dbReference type="ChEBI" id="CHEBI:29991"/>
    </ligand>
</feature>
<feature type="binding site" evidence="1">
    <location>
        <begin position="529"/>
        <end position="532"/>
    </location>
    <ligand>
        <name>ATP</name>
        <dbReference type="ChEBI" id="CHEBI:30616"/>
    </ligand>
</feature>
<feature type="site" description="Important for tRNA non-discrimination" evidence="1">
    <location>
        <position position="30"/>
    </location>
</feature>
<feature type="site" description="Important for tRNA non-discrimination" evidence="1">
    <location>
        <position position="82"/>
    </location>
</feature>
<accession>A8FL61</accession>